<accession>Q7KWT1</accession>
<accession>Q551W9</accession>
<dbReference type="EMBL" id="AAFI02000014">
    <property type="protein sequence ID" value="EAL69293.1"/>
    <property type="molecule type" value="Genomic_DNA"/>
</dbReference>
<dbReference type="RefSeq" id="XP_643209.1">
    <property type="nucleotide sequence ID" value="XM_638117.1"/>
</dbReference>
<dbReference type="PaxDb" id="44689-DDB0232081"/>
<dbReference type="EnsemblProtists" id="EAL69293">
    <property type="protein sequence ID" value="EAL69293"/>
    <property type="gene ID" value="DDB_G0276293"/>
</dbReference>
<dbReference type="GeneID" id="8620412"/>
<dbReference type="KEGG" id="ddi:DDB_G0276293"/>
<dbReference type="dictyBase" id="DDB_G0276293"/>
<dbReference type="VEuPathDB" id="AmoebaDB:DDB_G0276293"/>
<dbReference type="eggNOG" id="KOG3879">
    <property type="taxonomic scope" value="Eukaryota"/>
</dbReference>
<dbReference type="HOGENOM" id="CLU_557156_0_0_1"/>
<dbReference type="InParanoid" id="Q7KWT1"/>
<dbReference type="OMA" id="SHKRENI"/>
<dbReference type="PRO" id="PR:Q7KWT1"/>
<dbReference type="Proteomes" id="UP000002195">
    <property type="component" value="Chromosome 2"/>
</dbReference>
<dbReference type="InterPro" id="IPR019396">
    <property type="entry name" value="TM_Fragile-X-F-assoc"/>
</dbReference>
<dbReference type="PANTHER" id="PTHR13568">
    <property type="entry name" value="FAM11A, B PROTEIN"/>
    <property type="match status" value="1"/>
</dbReference>
<dbReference type="PANTHER" id="PTHR13568:SF10">
    <property type="entry name" value="TRANSMEMBRANE PROTEIN 185-LIKE"/>
    <property type="match status" value="1"/>
</dbReference>
<keyword id="KW-1185">Reference proteome</keyword>
<gene>
    <name type="ORF">DDB_G0276293</name>
</gene>
<proteinExistence type="inferred from homology"/>
<reference key="1">
    <citation type="journal article" date="2002" name="Nature">
        <title>Sequence and analysis of chromosome 2 of Dictyostelium discoideum.</title>
        <authorList>
            <person name="Gloeckner G."/>
            <person name="Eichinger L."/>
            <person name="Szafranski K."/>
            <person name="Pachebat J.A."/>
            <person name="Bankier A.T."/>
            <person name="Dear P.H."/>
            <person name="Lehmann R."/>
            <person name="Baumgart C."/>
            <person name="Parra G."/>
            <person name="Abril J.F."/>
            <person name="Guigo R."/>
            <person name="Kumpf K."/>
            <person name="Tunggal B."/>
            <person name="Cox E.C."/>
            <person name="Quail M.A."/>
            <person name="Platzer M."/>
            <person name="Rosenthal A."/>
            <person name="Noegel A.A."/>
        </authorList>
    </citation>
    <scope>NUCLEOTIDE SEQUENCE [LARGE SCALE GENOMIC DNA]</scope>
    <source>
        <strain>AX4</strain>
    </source>
</reference>
<reference key="2">
    <citation type="journal article" date="2005" name="Nature">
        <title>The genome of the social amoeba Dictyostelium discoideum.</title>
        <authorList>
            <person name="Eichinger L."/>
            <person name="Pachebat J.A."/>
            <person name="Gloeckner G."/>
            <person name="Rajandream M.A."/>
            <person name="Sucgang R."/>
            <person name="Berriman M."/>
            <person name="Song J."/>
            <person name="Olsen R."/>
            <person name="Szafranski K."/>
            <person name="Xu Q."/>
            <person name="Tunggal B."/>
            <person name="Kummerfeld S."/>
            <person name="Madera M."/>
            <person name="Konfortov B.A."/>
            <person name="Rivero F."/>
            <person name="Bankier A.T."/>
            <person name="Lehmann R."/>
            <person name="Hamlin N."/>
            <person name="Davies R."/>
            <person name="Gaudet P."/>
            <person name="Fey P."/>
            <person name="Pilcher K."/>
            <person name="Chen G."/>
            <person name="Saunders D."/>
            <person name="Sodergren E.J."/>
            <person name="Davis P."/>
            <person name="Kerhornou A."/>
            <person name="Nie X."/>
            <person name="Hall N."/>
            <person name="Anjard C."/>
            <person name="Hemphill L."/>
            <person name="Bason N."/>
            <person name="Farbrother P."/>
            <person name="Desany B."/>
            <person name="Just E."/>
            <person name="Morio T."/>
            <person name="Rost R."/>
            <person name="Churcher C.M."/>
            <person name="Cooper J."/>
            <person name="Haydock S."/>
            <person name="van Driessche N."/>
            <person name="Cronin A."/>
            <person name="Goodhead I."/>
            <person name="Muzny D.M."/>
            <person name="Mourier T."/>
            <person name="Pain A."/>
            <person name="Lu M."/>
            <person name="Harper D."/>
            <person name="Lindsay R."/>
            <person name="Hauser H."/>
            <person name="James K.D."/>
            <person name="Quiles M."/>
            <person name="Madan Babu M."/>
            <person name="Saito T."/>
            <person name="Buchrieser C."/>
            <person name="Wardroper A."/>
            <person name="Felder M."/>
            <person name="Thangavelu M."/>
            <person name="Johnson D."/>
            <person name="Knights A."/>
            <person name="Loulseged H."/>
            <person name="Mungall K.L."/>
            <person name="Oliver K."/>
            <person name="Price C."/>
            <person name="Quail M.A."/>
            <person name="Urushihara H."/>
            <person name="Hernandez J."/>
            <person name="Rabbinowitsch E."/>
            <person name="Steffen D."/>
            <person name="Sanders M."/>
            <person name="Ma J."/>
            <person name="Kohara Y."/>
            <person name="Sharp S."/>
            <person name="Simmonds M.N."/>
            <person name="Spiegler S."/>
            <person name="Tivey A."/>
            <person name="Sugano S."/>
            <person name="White B."/>
            <person name="Walker D."/>
            <person name="Woodward J.R."/>
            <person name="Winckler T."/>
            <person name="Tanaka Y."/>
            <person name="Shaulsky G."/>
            <person name="Schleicher M."/>
            <person name="Weinstock G.M."/>
            <person name="Rosenthal A."/>
            <person name="Cox E.C."/>
            <person name="Chisholm R.L."/>
            <person name="Gibbs R.A."/>
            <person name="Loomis W.F."/>
            <person name="Platzer M."/>
            <person name="Kay R.R."/>
            <person name="Williams J.G."/>
            <person name="Dear P.H."/>
            <person name="Noegel A.A."/>
            <person name="Barrell B.G."/>
            <person name="Kuspa A."/>
        </authorList>
    </citation>
    <scope>NUCLEOTIDE SEQUENCE [LARGE SCALE GENOMIC DNA]</scope>
    <source>
        <strain>AX4</strain>
    </source>
</reference>
<organism>
    <name type="scientific">Dictyostelium discoideum</name>
    <name type="common">Social amoeba</name>
    <dbReference type="NCBI Taxonomy" id="44689"/>
    <lineage>
        <taxon>Eukaryota</taxon>
        <taxon>Amoebozoa</taxon>
        <taxon>Evosea</taxon>
        <taxon>Eumycetozoa</taxon>
        <taxon>Dictyostelia</taxon>
        <taxon>Dictyosteliales</taxon>
        <taxon>Dictyosteliaceae</taxon>
        <taxon>Dictyostelium</taxon>
    </lineage>
</organism>
<feature type="chain" id="PRO_0000389206" description="Transmembrane protein 185-like">
    <location>
        <begin position="1"/>
        <end position="490"/>
    </location>
</feature>
<feature type="region of interest" description="Disordered" evidence="1">
    <location>
        <begin position="1"/>
        <end position="151"/>
    </location>
</feature>
<feature type="region of interest" description="Disordered" evidence="1">
    <location>
        <begin position="455"/>
        <end position="490"/>
    </location>
</feature>
<feature type="compositionally biased region" description="Low complexity" evidence="1">
    <location>
        <begin position="1"/>
        <end position="31"/>
    </location>
</feature>
<feature type="compositionally biased region" description="Polar residues" evidence="1">
    <location>
        <begin position="47"/>
        <end position="59"/>
    </location>
</feature>
<feature type="compositionally biased region" description="Low complexity" evidence="1">
    <location>
        <begin position="66"/>
        <end position="80"/>
    </location>
</feature>
<feature type="compositionally biased region" description="Low complexity" evidence="1">
    <location>
        <begin position="89"/>
        <end position="108"/>
    </location>
</feature>
<feature type="compositionally biased region" description="Polar residues" evidence="1">
    <location>
        <begin position="109"/>
        <end position="125"/>
    </location>
</feature>
<feature type="compositionally biased region" description="Gly residues" evidence="1">
    <location>
        <begin position="133"/>
        <end position="145"/>
    </location>
</feature>
<feature type="compositionally biased region" description="Acidic residues" evidence="1">
    <location>
        <begin position="463"/>
        <end position="472"/>
    </location>
</feature>
<comment type="similarity">
    <text evidence="2">Belongs to the TMEM185 family.</text>
</comment>
<sequence>MIENENTSLLSTSSSSTSSSPNNANSPSSLNIGISNSENGTPRKDNTSGNNSPSAQITKYNGIDISNNSSRNSSRPNSRSGYRGDSSSNNNNNNNNNNNNNNNNNNINKHNSIVYNKSNNKLNSIGGSNNDLQGGGGGNGNGNGNGSSKYKIGINNKDVEEKIEIKKQKKMNRTNNQKFWRIVGSILQIIGLSSIVFTIFIGLYIDGYIDWSYWILFIPVYVILAASYLATGSRVLSNLVSWIIRLVWRLSVFGLTVFVVFTIIHFKYNTFGFSVMMIPLLFTFGSVFVMGIFSLLFGIIFVDGKSTPQRKTKYIVNGLPLLFTGAILTPAAIMIALKLDGLYDAKLAVCFVSLFIGDIIASCFSFFLLIFSLGSKDTATFSIGQLLSIIFITICSIVFKVLLILATDQQHNINSLFLLIPLLVAEAFMVFCGINLFLRPPRVIVDNSEELAKSNMINNQDSSESESDDETEVSFKDREDEESEKLISNL</sequence>
<protein>
    <recommendedName>
        <fullName>Transmembrane protein 185-like</fullName>
    </recommendedName>
</protein>
<name>T185L_DICDI</name>
<evidence type="ECO:0000256" key="1">
    <source>
        <dbReference type="SAM" id="MobiDB-lite"/>
    </source>
</evidence>
<evidence type="ECO:0000305" key="2"/>